<keyword id="KW-0665">Pyrimidine biosynthesis</keyword>
<keyword id="KW-0808">Transferase</keyword>
<organism>
    <name type="scientific">Methylorubrum extorquens (strain CM4 / NCIMB 13688)</name>
    <name type="common">Methylobacterium extorquens</name>
    <dbReference type="NCBI Taxonomy" id="440085"/>
    <lineage>
        <taxon>Bacteria</taxon>
        <taxon>Pseudomonadati</taxon>
        <taxon>Pseudomonadota</taxon>
        <taxon>Alphaproteobacteria</taxon>
        <taxon>Hyphomicrobiales</taxon>
        <taxon>Methylobacteriaceae</taxon>
        <taxon>Methylorubrum</taxon>
    </lineage>
</organism>
<proteinExistence type="inferred from homology"/>
<sequence>MTAQTAPAFPHRHLLGIEGLSRPDIEALLERADAAVALSRQVEKKRTVLRGRTQINLFFEPSTRTQSSFELAGKRLGADVMNMSVASSSVKKGETLIDTAATLNAMRPDIIVVRHHAAGAVHLLARKVDCAVVNAGDGAHEHPTQALLDALTIRRNKGGIEGLQVAICGDVLHSRVARSNIILLQALGARVRVIGPSTLLPTGIERFGVEVFTDMRAGLKGCDIVMMLRLQRERMNGSFVPSVKEYFRYYGLDGDKLALAKPGALVMHPGPMNRGVEIASDIADGTQSLIREQVEMGVAVRMAVLEALATHLPNG</sequence>
<feature type="chain" id="PRO_1000116149" description="Aspartate carbamoyltransferase catalytic subunit">
    <location>
        <begin position="1"/>
        <end position="315"/>
    </location>
</feature>
<feature type="binding site" evidence="1">
    <location>
        <position position="64"/>
    </location>
    <ligand>
        <name>carbamoyl phosphate</name>
        <dbReference type="ChEBI" id="CHEBI:58228"/>
    </ligand>
</feature>
<feature type="binding site" evidence="1">
    <location>
        <position position="65"/>
    </location>
    <ligand>
        <name>carbamoyl phosphate</name>
        <dbReference type="ChEBI" id="CHEBI:58228"/>
    </ligand>
</feature>
<feature type="binding site" evidence="1">
    <location>
        <position position="92"/>
    </location>
    <ligand>
        <name>L-aspartate</name>
        <dbReference type="ChEBI" id="CHEBI:29991"/>
    </ligand>
</feature>
<feature type="binding site" evidence="1">
    <location>
        <position position="114"/>
    </location>
    <ligand>
        <name>carbamoyl phosphate</name>
        <dbReference type="ChEBI" id="CHEBI:58228"/>
    </ligand>
</feature>
<feature type="binding site" evidence="1">
    <location>
        <position position="142"/>
    </location>
    <ligand>
        <name>carbamoyl phosphate</name>
        <dbReference type="ChEBI" id="CHEBI:58228"/>
    </ligand>
</feature>
<feature type="binding site" evidence="1">
    <location>
        <position position="145"/>
    </location>
    <ligand>
        <name>carbamoyl phosphate</name>
        <dbReference type="ChEBI" id="CHEBI:58228"/>
    </ligand>
</feature>
<feature type="binding site" evidence="1">
    <location>
        <position position="175"/>
    </location>
    <ligand>
        <name>L-aspartate</name>
        <dbReference type="ChEBI" id="CHEBI:29991"/>
    </ligand>
</feature>
<feature type="binding site" evidence="1">
    <location>
        <position position="229"/>
    </location>
    <ligand>
        <name>L-aspartate</name>
        <dbReference type="ChEBI" id="CHEBI:29991"/>
    </ligand>
</feature>
<feature type="binding site" evidence="1">
    <location>
        <position position="270"/>
    </location>
    <ligand>
        <name>carbamoyl phosphate</name>
        <dbReference type="ChEBI" id="CHEBI:58228"/>
    </ligand>
</feature>
<feature type="binding site" evidence="1">
    <location>
        <position position="271"/>
    </location>
    <ligand>
        <name>carbamoyl phosphate</name>
        <dbReference type="ChEBI" id="CHEBI:58228"/>
    </ligand>
</feature>
<reference key="1">
    <citation type="submission" date="2008-12" db="EMBL/GenBank/DDBJ databases">
        <title>Complete sequence of chromosome of Methylobacterium chloromethanicum CM4.</title>
        <authorList>
            <consortium name="US DOE Joint Genome Institute"/>
            <person name="Lucas S."/>
            <person name="Copeland A."/>
            <person name="Lapidus A."/>
            <person name="Glavina del Rio T."/>
            <person name="Dalin E."/>
            <person name="Tice H."/>
            <person name="Bruce D."/>
            <person name="Goodwin L."/>
            <person name="Pitluck S."/>
            <person name="Chertkov O."/>
            <person name="Brettin T."/>
            <person name="Detter J.C."/>
            <person name="Han C."/>
            <person name="Larimer F."/>
            <person name="Land M."/>
            <person name="Hauser L."/>
            <person name="Kyrpides N."/>
            <person name="Mikhailova N."/>
            <person name="Marx C."/>
            <person name="Richardson P."/>
        </authorList>
    </citation>
    <scope>NUCLEOTIDE SEQUENCE [LARGE SCALE GENOMIC DNA]</scope>
    <source>
        <strain>CM4 / NCIMB 13688</strain>
    </source>
</reference>
<comment type="function">
    <text evidence="1">Catalyzes the condensation of carbamoyl phosphate and aspartate to form carbamoyl aspartate and inorganic phosphate, the committed step in the de novo pyrimidine nucleotide biosynthesis pathway.</text>
</comment>
<comment type="catalytic activity">
    <reaction evidence="1">
        <text>carbamoyl phosphate + L-aspartate = N-carbamoyl-L-aspartate + phosphate + H(+)</text>
        <dbReference type="Rhea" id="RHEA:20013"/>
        <dbReference type="ChEBI" id="CHEBI:15378"/>
        <dbReference type="ChEBI" id="CHEBI:29991"/>
        <dbReference type="ChEBI" id="CHEBI:32814"/>
        <dbReference type="ChEBI" id="CHEBI:43474"/>
        <dbReference type="ChEBI" id="CHEBI:58228"/>
        <dbReference type="EC" id="2.1.3.2"/>
    </reaction>
</comment>
<comment type="pathway">
    <text evidence="1">Pyrimidine metabolism; UMP biosynthesis via de novo pathway; (S)-dihydroorotate from bicarbonate: step 2/3.</text>
</comment>
<comment type="subunit">
    <text evidence="1">Heterododecamer (2C3:3R2) of six catalytic PyrB chains organized as two trimers (C3), and six regulatory PyrI chains organized as three dimers (R2).</text>
</comment>
<comment type="similarity">
    <text evidence="1">Belongs to the aspartate/ornithine carbamoyltransferase superfamily. ATCase family.</text>
</comment>
<evidence type="ECO:0000255" key="1">
    <source>
        <dbReference type="HAMAP-Rule" id="MF_00001"/>
    </source>
</evidence>
<name>PYRB_METC4</name>
<gene>
    <name evidence="1" type="primary">pyrB</name>
    <name type="ordered locus">Mchl_3635</name>
</gene>
<dbReference type="EC" id="2.1.3.2" evidence="1"/>
<dbReference type="EMBL" id="CP001298">
    <property type="protein sequence ID" value="ACK84455.1"/>
    <property type="molecule type" value="Genomic_DNA"/>
</dbReference>
<dbReference type="RefSeq" id="WP_012254578.1">
    <property type="nucleotide sequence ID" value="NC_011757.1"/>
</dbReference>
<dbReference type="SMR" id="B7KW98"/>
<dbReference type="GeneID" id="72990954"/>
<dbReference type="KEGG" id="mch:Mchl_3635"/>
<dbReference type="HOGENOM" id="CLU_043846_2_0_5"/>
<dbReference type="UniPathway" id="UPA00070">
    <property type="reaction ID" value="UER00116"/>
</dbReference>
<dbReference type="Proteomes" id="UP000002385">
    <property type="component" value="Chromosome"/>
</dbReference>
<dbReference type="GO" id="GO:0005829">
    <property type="term" value="C:cytosol"/>
    <property type="evidence" value="ECO:0007669"/>
    <property type="project" value="TreeGrafter"/>
</dbReference>
<dbReference type="GO" id="GO:0016597">
    <property type="term" value="F:amino acid binding"/>
    <property type="evidence" value="ECO:0007669"/>
    <property type="project" value="InterPro"/>
</dbReference>
<dbReference type="GO" id="GO:0004070">
    <property type="term" value="F:aspartate carbamoyltransferase activity"/>
    <property type="evidence" value="ECO:0007669"/>
    <property type="project" value="UniProtKB-UniRule"/>
</dbReference>
<dbReference type="GO" id="GO:0006207">
    <property type="term" value="P:'de novo' pyrimidine nucleobase biosynthetic process"/>
    <property type="evidence" value="ECO:0007669"/>
    <property type="project" value="InterPro"/>
</dbReference>
<dbReference type="GO" id="GO:0044205">
    <property type="term" value="P:'de novo' UMP biosynthetic process"/>
    <property type="evidence" value="ECO:0007669"/>
    <property type="project" value="UniProtKB-UniRule"/>
</dbReference>
<dbReference type="GO" id="GO:0006520">
    <property type="term" value="P:amino acid metabolic process"/>
    <property type="evidence" value="ECO:0007669"/>
    <property type="project" value="InterPro"/>
</dbReference>
<dbReference type="FunFam" id="3.40.50.1370:FF:000007">
    <property type="entry name" value="Aspartate carbamoyltransferase"/>
    <property type="match status" value="1"/>
</dbReference>
<dbReference type="Gene3D" id="3.40.50.1370">
    <property type="entry name" value="Aspartate/ornithine carbamoyltransferase"/>
    <property type="match status" value="2"/>
</dbReference>
<dbReference type="HAMAP" id="MF_00001">
    <property type="entry name" value="Asp_carb_tr"/>
    <property type="match status" value="1"/>
</dbReference>
<dbReference type="InterPro" id="IPR006132">
    <property type="entry name" value="Asp/Orn_carbamoyltranf_P-bd"/>
</dbReference>
<dbReference type="InterPro" id="IPR006130">
    <property type="entry name" value="Asp/Orn_carbamoylTrfase"/>
</dbReference>
<dbReference type="InterPro" id="IPR036901">
    <property type="entry name" value="Asp/Orn_carbamoylTrfase_sf"/>
</dbReference>
<dbReference type="InterPro" id="IPR002082">
    <property type="entry name" value="Asp_carbamoyltransf"/>
</dbReference>
<dbReference type="InterPro" id="IPR006131">
    <property type="entry name" value="Asp_carbamoyltransf_Asp/Orn-bd"/>
</dbReference>
<dbReference type="NCBIfam" id="TIGR00670">
    <property type="entry name" value="asp_carb_tr"/>
    <property type="match status" value="1"/>
</dbReference>
<dbReference type="NCBIfam" id="NF002032">
    <property type="entry name" value="PRK00856.1"/>
    <property type="match status" value="1"/>
</dbReference>
<dbReference type="PANTHER" id="PTHR45753:SF6">
    <property type="entry name" value="ASPARTATE CARBAMOYLTRANSFERASE"/>
    <property type="match status" value="1"/>
</dbReference>
<dbReference type="PANTHER" id="PTHR45753">
    <property type="entry name" value="ORNITHINE CARBAMOYLTRANSFERASE, MITOCHONDRIAL"/>
    <property type="match status" value="1"/>
</dbReference>
<dbReference type="Pfam" id="PF00185">
    <property type="entry name" value="OTCace"/>
    <property type="match status" value="1"/>
</dbReference>
<dbReference type="Pfam" id="PF02729">
    <property type="entry name" value="OTCace_N"/>
    <property type="match status" value="1"/>
</dbReference>
<dbReference type="PRINTS" id="PR00100">
    <property type="entry name" value="AOTCASE"/>
</dbReference>
<dbReference type="PRINTS" id="PR00101">
    <property type="entry name" value="ATCASE"/>
</dbReference>
<dbReference type="SUPFAM" id="SSF53671">
    <property type="entry name" value="Aspartate/ornithine carbamoyltransferase"/>
    <property type="match status" value="1"/>
</dbReference>
<dbReference type="PROSITE" id="PS00097">
    <property type="entry name" value="CARBAMOYLTRANSFERASE"/>
    <property type="match status" value="1"/>
</dbReference>
<accession>B7KW98</accession>
<protein>
    <recommendedName>
        <fullName evidence="1">Aspartate carbamoyltransferase catalytic subunit</fullName>
        <ecNumber evidence="1">2.1.3.2</ecNumber>
    </recommendedName>
    <alternativeName>
        <fullName evidence="1">Aspartate transcarbamylase</fullName>
        <shortName evidence="1">ATCase</shortName>
    </alternativeName>
</protein>